<sequence length="165" mass="17566">MPLNREDKQAVVAEVAAQVAKAQTVVLAEYRGIAVGDLTTLRAKAREQKVYLRVLKNTLARRAVEGTPFAPLAEQMTGPLIYGISEDAIAAAKVVNDFSKSNDKLVIKAGSFDGKVMDKAGVQALASIPSREELLSKLLFVMQAPVSGFARALAALAEKKQAEAA</sequence>
<name>RL10_BURM1</name>
<evidence type="ECO:0000255" key="1">
    <source>
        <dbReference type="HAMAP-Rule" id="MF_00362"/>
    </source>
</evidence>
<evidence type="ECO:0000305" key="2"/>
<comment type="function">
    <text evidence="1">Forms part of the ribosomal stalk, playing a central role in the interaction of the ribosome with GTP-bound translation factors.</text>
</comment>
<comment type="subunit">
    <text evidence="1">Part of the ribosomal stalk of the 50S ribosomal subunit. The N-terminus interacts with L11 and the large rRNA to form the base of the stalk. The C-terminus forms an elongated spine to which L12 dimers bind in a sequential fashion forming a multimeric L10(L12)X complex.</text>
</comment>
<comment type="similarity">
    <text evidence="1">Belongs to the universal ribosomal protein uL10 family.</text>
</comment>
<reference key="1">
    <citation type="submission" date="2007-10" db="EMBL/GenBank/DDBJ databases">
        <title>Complete sequence of chromosome 1 of Burkholderia multivorans ATCC 17616.</title>
        <authorList>
            <person name="Copeland A."/>
            <person name="Lucas S."/>
            <person name="Lapidus A."/>
            <person name="Barry K."/>
            <person name="Glavina del Rio T."/>
            <person name="Dalin E."/>
            <person name="Tice H."/>
            <person name="Pitluck S."/>
            <person name="Chain P."/>
            <person name="Malfatti S."/>
            <person name="Shin M."/>
            <person name="Vergez L."/>
            <person name="Schmutz J."/>
            <person name="Larimer F."/>
            <person name="Land M."/>
            <person name="Hauser L."/>
            <person name="Kyrpides N."/>
            <person name="Kim E."/>
            <person name="Tiedje J."/>
            <person name="Richardson P."/>
        </authorList>
    </citation>
    <scope>NUCLEOTIDE SEQUENCE [LARGE SCALE GENOMIC DNA]</scope>
    <source>
        <strain>ATCC 17616 / 249</strain>
    </source>
</reference>
<reference key="2">
    <citation type="submission" date="2007-04" db="EMBL/GenBank/DDBJ databases">
        <title>Complete genome sequence of Burkholderia multivorans ATCC 17616.</title>
        <authorList>
            <person name="Ohtsubo Y."/>
            <person name="Yamashita A."/>
            <person name="Kurokawa K."/>
            <person name="Takami H."/>
            <person name="Yuhara S."/>
            <person name="Nishiyama E."/>
            <person name="Endo R."/>
            <person name="Miyazaki R."/>
            <person name="Ono A."/>
            <person name="Yano K."/>
            <person name="Ito M."/>
            <person name="Sota M."/>
            <person name="Yuji N."/>
            <person name="Hattori M."/>
            <person name="Tsuda M."/>
        </authorList>
    </citation>
    <scope>NUCLEOTIDE SEQUENCE [LARGE SCALE GENOMIC DNA]</scope>
    <source>
        <strain>ATCC 17616 / 249</strain>
    </source>
</reference>
<organism>
    <name type="scientific">Burkholderia multivorans (strain ATCC 17616 / 249)</name>
    <dbReference type="NCBI Taxonomy" id="395019"/>
    <lineage>
        <taxon>Bacteria</taxon>
        <taxon>Pseudomonadati</taxon>
        <taxon>Pseudomonadota</taxon>
        <taxon>Betaproteobacteria</taxon>
        <taxon>Burkholderiales</taxon>
        <taxon>Burkholderiaceae</taxon>
        <taxon>Burkholderia</taxon>
        <taxon>Burkholderia cepacia complex</taxon>
    </lineage>
</organism>
<protein>
    <recommendedName>
        <fullName evidence="1">Large ribosomal subunit protein uL10</fullName>
    </recommendedName>
    <alternativeName>
        <fullName evidence="2">50S ribosomal protein L10</fullName>
    </alternativeName>
</protein>
<dbReference type="EMBL" id="CP000868">
    <property type="protein sequence ID" value="ABX13934.1"/>
    <property type="molecule type" value="Genomic_DNA"/>
</dbReference>
<dbReference type="EMBL" id="AP009385">
    <property type="protein sequence ID" value="BAG44900.1"/>
    <property type="molecule type" value="Genomic_DNA"/>
</dbReference>
<dbReference type="RefSeq" id="WP_006400668.1">
    <property type="nucleotide sequence ID" value="NC_010804.1"/>
</dbReference>
<dbReference type="SMR" id="A9ADI3"/>
<dbReference type="STRING" id="395019.BMULJ_03015"/>
<dbReference type="GeneID" id="89568631"/>
<dbReference type="KEGG" id="bmj:BMULJ_03015"/>
<dbReference type="KEGG" id="bmu:Bmul_0239"/>
<dbReference type="eggNOG" id="COG0244">
    <property type="taxonomic scope" value="Bacteria"/>
</dbReference>
<dbReference type="HOGENOM" id="CLU_092227_0_1_4"/>
<dbReference type="Proteomes" id="UP000008815">
    <property type="component" value="Chromosome 1"/>
</dbReference>
<dbReference type="GO" id="GO:1990904">
    <property type="term" value="C:ribonucleoprotein complex"/>
    <property type="evidence" value="ECO:0007669"/>
    <property type="project" value="UniProtKB-KW"/>
</dbReference>
<dbReference type="GO" id="GO:0005840">
    <property type="term" value="C:ribosome"/>
    <property type="evidence" value="ECO:0007669"/>
    <property type="project" value="UniProtKB-KW"/>
</dbReference>
<dbReference type="GO" id="GO:0070180">
    <property type="term" value="F:large ribosomal subunit rRNA binding"/>
    <property type="evidence" value="ECO:0007669"/>
    <property type="project" value="UniProtKB-UniRule"/>
</dbReference>
<dbReference type="GO" id="GO:0006412">
    <property type="term" value="P:translation"/>
    <property type="evidence" value="ECO:0007669"/>
    <property type="project" value="UniProtKB-UniRule"/>
</dbReference>
<dbReference type="CDD" id="cd05797">
    <property type="entry name" value="Ribosomal_L10"/>
    <property type="match status" value="1"/>
</dbReference>
<dbReference type="Gene3D" id="3.30.70.1730">
    <property type="match status" value="1"/>
</dbReference>
<dbReference type="Gene3D" id="6.10.250.290">
    <property type="match status" value="1"/>
</dbReference>
<dbReference type="HAMAP" id="MF_00362">
    <property type="entry name" value="Ribosomal_uL10"/>
    <property type="match status" value="1"/>
</dbReference>
<dbReference type="InterPro" id="IPR001790">
    <property type="entry name" value="Ribosomal_uL10"/>
</dbReference>
<dbReference type="InterPro" id="IPR043141">
    <property type="entry name" value="Ribosomal_uL10-like_sf"/>
</dbReference>
<dbReference type="InterPro" id="IPR022973">
    <property type="entry name" value="Ribosomal_uL10_bac"/>
</dbReference>
<dbReference type="InterPro" id="IPR047865">
    <property type="entry name" value="Ribosomal_uL10_bac_type"/>
</dbReference>
<dbReference type="NCBIfam" id="NF000955">
    <property type="entry name" value="PRK00099.1-1"/>
    <property type="match status" value="1"/>
</dbReference>
<dbReference type="PANTHER" id="PTHR11560">
    <property type="entry name" value="39S RIBOSOMAL PROTEIN L10, MITOCHONDRIAL"/>
    <property type="match status" value="1"/>
</dbReference>
<dbReference type="Pfam" id="PF00466">
    <property type="entry name" value="Ribosomal_L10"/>
    <property type="match status" value="1"/>
</dbReference>
<dbReference type="SUPFAM" id="SSF160369">
    <property type="entry name" value="Ribosomal protein L10-like"/>
    <property type="match status" value="1"/>
</dbReference>
<feature type="chain" id="PRO_1000120931" description="Large ribosomal subunit protein uL10">
    <location>
        <begin position="1"/>
        <end position="165"/>
    </location>
</feature>
<accession>A9ADI3</accession>
<gene>
    <name evidence="1" type="primary">rplJ</name>
    <name type="ordered locus">Bmul_0239</name>
    <name type="ordered locus">BMULJ_03015</name>
</gene>
<proteinExistence type="inferred from homology"/>
<keyword id="KW-1185">Reference proteome</keyword>
<keyword id="KW-0687">Ribonucleoprotein</keyword>
<keyword id="KW-0689">Ribosomal protein</keyword>
<keyword id="KW-0694">RNA-binding</keyword>
<keyword id="KW-0699">rRNA-binding</keyword>